<evidence type="ECO:0000250" key="1"/>
<evidence type="ECO:0000255" key="2"/>
<evidence type="ECO:0000305" key="3"/>
<keyword id="KW-0574">Periplasm</keyword>
<keyword id="KW-1185">Reference proteome</keyword>
<keyword id="KW-0732">Signal</keyword>
<comment type="function">
    <text evidence="1">Probably involved in the control of the structural glucose backbone of osmoregulated periplasmic glucans (OPGs).</text>
</comment>
<comment type="pathway">
    <text>Glycan metabolism; osmoregulated periplasmic glucan (OPG) biosynthesis.</text>
</comment>
<comment type="subcellular location">
    <subcellularLocation>
        <location evidence="1">Periplasm</location>
    </subcellularLocation>
</comment>
<comment type="PTM">
    <text>Predicted to be exported by the Tat system. The position of the signal peptide cleavage has not been experimentally proven.</text>
</comment>
<comment type="similarity">
    <text evidence="3">Belongs to the OpgD/OpgG family.</text>
</comment>
<organism>
    <name type="scientific">Escherichia coli O6:H1 (strain CFT073 / ATCC 700928 / UPEC)</name>
    <dbReference type="NCBI Taxonomy" id="199310"/>
    <lineage>
        <taxon>Bacteria</taxon>
        <taxon>Pseudomonadati</taxon>
        <taxon>Pseudomonadota</taxon>
        <taxon>Gammaproteobacteria</taxon>
        <taxon>Enterobacterales</taxon>
        <taxon>Enterobacteriaceae</taxon>
        <taxon>Escherichia</taxon>
    </lineage>
</organism>
<sequence length="551" mass="62795">MDRRRFIKGSMAMAAVCGTSGIASLFSQAAFAADSDIADGQTQRFDFSILQSMAHDLAQTAWRGAPRPLPDTLATMTPQAYNSIQYDAEKSLWHNVENRQLDAQFFHMGMGFRRRVRMFSVDPATHLAREIHFRPELFKYNDAGVDTKQLEGQSDLGFAGFRVFKAPELARRDVVSFLGASYFRAVDDTYQYGLSARGLAIDTYTDSKEEFPDFTAFWFDTVKPGATTFTVYALLDSASITGAYKFTIHCEKNQVIMDVENHLYARKDIKQLGIAPMTSMFSCGTNERRMCDTIHPQIHDSDRLSMWRGNGEWICRPLNNPQKLQFNAYTDNNPKGFGLLQLDRDFSHYQDIMGWYNKRPSLWVEPRNKWGKGTIGLMEIPTTGETLDNIVCFWQPEKAVKAGDEFAFQYRLYWSAQPPVHCPLARVMATRTGMGGFPEGWAPGEHYPEKWARRFAVDFVGGDLKAAAPKGIEPVITLSSGEAKQIEILYIEPIDGYRIQFDWYPTSDSTDPVDMRMYLRCQGDAISETWLYQYFPPAPDKRQYVDDRVMS</sequence>
<name>OPGD_ECOL6</name>
<gene>
    <name type="primary">mdoD</name>
    <name type="synonym">opgD</name>
    <name type="ordered locus">c1849</name>
</gene>
<accession>Q8CW34</accession>
<reference key="1">
    <citation type="journal article" date="2002" name="Proc. Natl. Acad. Sci. U.S.A.">
        <title>Extensive mosaic structure revealed by the complete genome sequence of uropathogenic Escherichia coli.</title>
        <authorList>
            <person name="Welch R.A."/>
            <person name="Burland V."/>
            <person name="Plunkett G. III"/>
            <person name="Redford P."/>
            <person name="Roesch P."/>
            <person name="Rasko D."/>
            <person name="Buckles E.L."/>
            <person name="Liou S.-R."/>
            <person name="Boutin A."/>
            <person name="Hackett J."/>
            <person name="Stroud D."/>
            <person name="Mayhew G.F."/>
            <person name="Rose D.J."/>
            <person name="Zhou S."/>
            <person name="Schwartz D.C."/>
            <person name="Perna N.T."/>
            <person name="Mobley H.L.T."/>
            <person name="Donnenberg M.S."/>
            <person name="Blattner F.R."/>
        </authorList>
    </citation>
    <scope>NUCLEOTIDE SEQUENCE [LARGE SCALE GENOMIC DNA]</scope>
    <source>
        <strain>CFT073 / ATCC 700928 / UPEC</strain>
    </source>
</reference>
<feature type="signal peptide" description="Tat-type signal" evidence="2">
    <location>
        <begin position="1"/>
        <end position="32"/>
    </location>
</feature>
<feature type="chain" id="PRO_0000020207" description="Glucans biosynthesis protein D">
    <location>
        <begin position="33"/>
        <end position="551"/>
    </location>
</feature>
<proteinExistence type="inferred from homology"/>
<dbReference type="EMBL" id="AE014075">
    <property type="protein sequence ID" value="AAN80312.1"/>
    <property type="molecule type" value="Genomic_DNA"/>
</dbReference>
<dbReference type="RefSeq" id="WP_000375944.1">
    <property type="nucleotide sequence ID" value="NZ_CP051263.1"/>
</dbReference>
<dbReference type="SMR" id="Q8CW34"/>
<dbReference type="STRING" id="199310.c1849"/>
<dbReference type="KEGG" id="ecc:c1849"/>
<dbReference type="eggNOG" id="COG3131">
    <property type="taxonomic scope" value="Bacteria"/>
</dbReference>
<dbReference type="HOGENOM" id="CLU_023403_2_0_6"/>
<dbReference type="BioCyc" id="ECOL199310:C1849-MONOMER"/>
<dbReference type="UniPathway" id="UPA00637"/>
<dbReference type="Proteomes" id="UP000001410">
    <property type="component" value="Chromosome"/>
</dbReference>
<dbReference type="GO" id="GO:0030288">
    <property type="term" value="C:outer membrane-bounded periplasmic space"/>
    <property type="evidence" value="ECO:0007669"/>
    <property type="project" value="TreeGrafter"/>
</dbReference>
<dbReference type="GO" id="GO:0030246">
    <property type="term" value="F:carbohydrate binding"/>
    <property type="evidence" value="ECO:0007669"/>
    <property type="project" value="InterPro"/>
</dbReference>
<dbReference type="GO" id="GO:0003824">
    <property type="term" value="F:catalytic activity"/>
    <property type="evidence" value="ECO:0007669"/>
    <property type="project" value="InterPro"/>
</dbReference>
<dbReference type="GO" id="GO:0051274">
    <property type="term" value="P:beta-glucan biosynthetic process"/>
    <property type="evidence" value="ECO:0007669"/>
    <property type="project" value="TreeGrafter"/>
</dbReference>
<dbReference type="FunFam" id="2.60.40.10:FF:000379">
    <property type="entry name" value="Glucans biosynthesis protein D"/>
    <property type="match status" value="1"/>
</dbReference>
<dbReference type="FunFam" id="2.70.98.10:FF:000004">
    <property type="entry name" value="Glucans biosynthesis protein D"/>
    <property type="match status" value="1"/>
</dbReference>
<dbReference type="Gene3D" id="2.70.98.10">
    <property type="match status" value="1"/>
</dbReference>
<dbReference type="Gene3D" id="2.60.40.10">
    <property type="entry name" value="Immunoglobulins"/>
    <property type="match status" value="1"/>
</dbReference>
<dbReference type="HAMAP" id="MF_01068">
    <property type="entry name" value="MdoD_OpgD"/>
    <property type="match status" value="1"/>
</dbReference>
<dbReference type="InterPro" id="IPR011013">
    <property type="entry name" value="Gal_mutarotase_sf_dom"/>
</dbReference>
<dbReference type="InterPro" id="IPR014718">
    <property type="entry name" value="GH-type_carb-bd"/>
</dbReference>
<dbReference type="InterPro" id="IPR023724">
    <property type="entry name" value="Glucan_biosyn_MdoD"/>
</dbReference>
<dbReference type="InterPro" id="IPR014438">
    <property type="entry name" value="Glucan_biosyn_MdoG/MdoD"/>
</dbReference>
<dbReference type="InterPro" id="IPR007444">
    <property type="entry name" value="Glucan_biosyn_MdoG_C"/>
</dbReference>
<dbReference type="InterPro" id="IPR013783">
    <property type="entry name" value="Ig-like_fold"/>
</dbReference>
<dbReference type="InterPro" id="IPR014756">
    <property type="entry name" value="Ig_E-set"/>
</dbReference>
<dbReference type="InterPro" id="IPR006311">
    <property type="entry name" value="TAT_signal"/>
</dbReference>
<dbReference type="InterPro" id="IPR019546">
    <property type="entry name" value="TAT_signal_bac_arc"/>
</dbReference>
<dbReference type="NCBIfam" id="TIGR01409">
    <property type="entry name" value="TAT_signal_seq"/>
    <property type="match status" value="1"/>
</dbReference>
<dbReference type="PANTHER" id="PTHR30504">
    <property type="entry name" value="GLUCANS BIOSYNTHESIS PROTEIN"/>
    <property type="match status" value="1"/>
</dbReference>
<dbReference type="PANTHER" id="PTHR30504:SF3">
    <property type="entry name" value="GLUCANS BIOSYNTHESIS PROTEIN D"/>
    <property type="match status" value="1"/>
</dbReference>
<dbReference type="Pfam" id="PF04349">
    <property type="entry name" value="MdoG"/>
    <property type="match status" value="1"/>
</dbReference>
<dbReference type="PIRSF" id="PIRSF006281">
    <property type="entry name" value="MdoG"/>
    <property type="match status" value="1"/>
</dbReference>
<dbReference type="SUPFAM" id="SSF81296">
    <property type="entry name" value="E set domains"/>
    <property type="match status" value="1"/>
</dbReference>
<dbReference type="SUPFAM" id="SSF74650">
    <property type="entry name" value="Galactose mutarotase-like"/>
    <property type="match status" value="1"/>
</dbReference>
<dbReference type="PROSITE" id="PS51318">
    <property type="entry name" value="TAT"/>
    <property type="match status" value="1"/>
</dbReference>
<protein>
    <recommendedName>
        <fullName>Glucans biosynthesis protein D</fullName>
    </recommendedName>
</protein>